<accession>Q3MIF4</accession>
<evidence type="ECO:0000250" key="1"/>
<evidence type="ECO:0000305" key="2"/>
<protein>
    <recommendedName>
        <fullName>Xylulose kinase</fullName>
        <shortName>Xylulokinase</shortName>
        <ecNumber>2.7.1.17</ecNumber>
    </recommendedName>
</protein>
<dbReference type="EC" id="2.7.1.17"/>
<dbReference type="EMBL" id="BC101852">
    <property type="protein sequence ID" value="AAI01853.1"/>
    <property type="molecule type" value="mRNA"/>
</dbReference>
<dbReference type="RefSeq" id="NP_001028876.1">
    <property type="nucleotide sequence ID" value="NM_001033704.1"/>
</dbReference>
<dbReference type="SMR" id="Q3MIF4"/>
<dbReference type="FunCoup" id="Q3MIF4">
    <property type="interactions" value="996"/>
</dbReference>
<dbReference type="STRING" id="10116.ENSRNOP00000019106"/>
<dbReference type="PhosphoSitePlus" id="Q3MIF4"/>
<dbReference type="PaxDb" id="10116-ENSRNOP00000019106"/>
<dbReference type="PeptideAtlas" id="Q3MIF4"/>
<dbReference type="GeneID" id="316067"/>
<dbReference type="KEGG" id="rno:316067"/>
<dbReference type="UCSC" id="RGD:1307372">
    <property type="organism name" value="rat"/>
</dbReference>
<dbReference type="AGR" id="RGD:1307372"/>
<dbReference type="CTD" id="9942"/>
<dbReference type="RGD" id="1307372">
    <property type="gene designation" value="Xylb"/>
</dbReference>
<dbReference type="eggNOG" id="KOG2531">
    <property type="taxonomic scope" value="Eukaryota"/>
</dbReference>
<dbReference type="InParanoid" id="Q3MIF4"/>
<dbReference type="PhylomeDB" id="Q3MIF4"/>
<dbReference type="Reactome" id="R-RNO-5661270">
    <property type="pathway name" value="Formation of xylulose-5-phosphate"/>
</dbReference>
<dbReference type="PRO" id="PR:Q3MIF4"/>
<dbReference type="Proteomes" id="UP000002494">
    <property type="component" value="Unplaced"/>
</dbReference>
<dbReference type="GO" id="GO:0005829">
    <property type="term" value="C:cytosol"/>
    <property type="evidence" value="ECO:0000318"/>
    <property type="project" value="GO_Central"/>
</dbReference>
<dbReference type="GO" id="GO:0005524">
    <property type="term" value="F:ATP binding"/>
    <property type="evidence" value="ECO:0007669"/>
    <property type="project" value="UniProtKB-KW"/>
</dbReference>
<dbReference type="GO" id="GO:0004856">
    <property type="term" value="F:D-xylulokinase activity"/>
    <property type="evidence" value="ECO:0000250"/>
    <property type="project" value="UniProtKB"/>
</dbReference>
<dbReference type="GO" id="GO:0042732">
    <property type="term" value="P:D-xylose metabolic process"/>
    <property type="evidence" value="ECO:0007669"/>
    <property type="project" value="UniProtKB-KW"/>
</dbReference>
<dbReference type="GO" id="GO:0005997">
    <property type="term" value="P:xylulose metabolic process"/>
    <property type="evidence" value="ECO:0000250"/>
    <property type="project" value="UniProtKB"/>
</dbReference>
<dbReference type="CDD" id="cd07776">
    <property type="entry name" value="ASKHA_NBD_FGGY_SpXK-like"/>
    <property type="match status" value="1"/>
</dbReference>
<dbReference type="FunFam" id="3.30.420.40:FF:000126">
    <property type="entry name" value="Xylulose kinase"/>
    <property type="match status" value="1"/>
</dbReference>
<dbReference type="Gene3D" id="3.30.420.40">
    <property type="match status" value="2"/>
</dbReference>
<dbReference type="InterPro" id="IPR043129">
    <property type="entry name" value="ATPase_NBD"/>
</dbReference>
<dbReference type="InterPro" id="IPR000577">
    <property type="entry name" value="Carb_kinase_FGGY"/>
</dbReference>
<dbReference type="InterPro" id="IPR042024">
    <property type="entry name" value="D-XK_euk"/>
</dbReference>
<dbReference type="InterPro" id="IPR018485">
    <property type="entry name" value="FGGY_C"/>
</dbReference>
<dbReference type="InterPro" id="IPR018484">
    <property type="entry name" value="FGGY_N"/>
</dbReference>
<dbReference type="PANTHER" id="PTHR10196">
    <property type="entry name" value="SUGAR KINASE"/>
    <property type="match status" value="1"/>
</dbReference>
<dbReference type="PANTHER" id="PTHR10196:SF57">
    <property type="entry name" value="XYLULOSE KINASE"/>
    <property type="match status" value="1"/>
</dbReference>
<dbReference type="Pfam" id="PF02782">
    <property type="entry name" value="FGGY_C"/>
    <property type="match status" value="1"/>
</dbReference>
<dbReference type="Pfam" id="PF00370">
    <property type="entry name" value="FGGY_N"/>
    <property type="match status" value="1"/>
</dbReference>
<dbReference type="PIRSF" id="PIRSF000538">
    <property type="entry name" value="GlpK"/>
    <property type="match status" value="1"/>
</dbReference>
<dbReference type="SUPFAM" id="SSF53067">
    <property type="entry name" value="Actin-like ATPase domain"/>
    <property type="match status" value="2"/>
</dbReference>
<proteinExistence type="evidence at transcript level"/>
<keyword id="KW-0067">ATP-binding</keyword>
<keyword id="KW-0119">Carbohydrate metabolism</keyword>
<keyword id="KW-0418">Kinase</keyword>
<keyword id="KW-0547">Nucleotide-binding</keyword>
<keyword id="KW-1185">Reference proteome</keyword>
<keyword id="KW-0808">Transferase</keyword>
<keyword id="KW-0859">Xylose metabolism</keyword>
<gene>
    <name type="primary">Xylb</name>
</gene>
<comment type="function">
    <text evidence="1">Phosphorylates D-xylulose to produce D-xylulose 5-phosphate, a molecule that may play an important role in the regulation of glucose metabolism and lipogenesis.</text>
</comment>
<comment type="catalytic activity">
    <reaction>
        <text>D-xylulose + ATP = D-xylulose 5-phosphate + ADP + H(+)</text>
        <dbReference type="Rhea" id="RHEA:10964"/>
        <dbReference type="ChEBI" id="CHEBI:15378"/>
        <dbReference type="ChEBI" id="CHEBI:17140"/>
        <dbReference type="ChEBI" id="CHEBI:30616"/>
        <dbReference type="ChEBI" id="CHEBI:57737"/>
        <dbReference type="ChEBI" id="CHEBI:456216"/>
        <dbReference type="EC" id="2.7.1.17"/>
    </reaction>
</comment>
<comment type="subunit">
    <text evidence="1">Monomer.</text>
</comment>
<comment type="similarity">
    <text evidence="2">Belongs to the FGGY kinase family.</text>
</comment>
<feature type="chain" id="PRO_0000230988" description="Xylulose kinase">
    <location>
        <begin position="1"/>
        <end position="536"/>
    </location>
</feature>
<feature type="binding site" evidence="1">
    <location>
        <position position="99"/>
    </location>
    <ligand>
        <name>substrate</name>
    </ligand>
</feature>
<feature type="binding site" evidence="1">
    <location>
        <position position="170"/>
    </location>
    <ligand>
        <name>substrate</name>
    </ligand>
</feature>
<feature type="binding site" evidence="1">
    <location>
        <position position="280"/>
    </location>
    <ligand>
        <name>substrate</name>
    </ligand>
</feature>
<feature type="binding site" evidence="1">
    <location>
        <position position="281"/>
    </location>
    <ligand>
        <name>substrate</name>
    </ligand>
</feature>
<feature type="binding site" evidence="1">
    <location>
        <position position="355"/>
    </location>
    <ligand>
        <name>ATP</name>
        <dbReference type="ChEBI" id="CHEBI:30616"/>
    </ligand>
</feature>
<feature type="binding site" evidence="1">
    <location>
        <begin position="441"/>
        <end position="442"/>
    </location>
    <ligand>
        <name>ATP</name>
        <dbReference type="ChEBI" id="CHEBI:30616"/>
    </ligand>
</feature>
<feature type="binding site" evidence="1">
    <location>
        <position position="445"/>
    </location>
    <ligand>
        <name>ATP</name>
        <dbReference type="ChEBI" id="CHEBI:30616"/>
    </ligand>
</feature>
<name>XYLB_RAT</name>
<organism>
    <name type="scientific">Rattus norvegicus</name>
    <name type="common">Rat</name>
    <dbReference type="NCBI Taxonomy" id="10116"/>
    <lineage>
        <taxon>Eukaryota</taxon>
        <taxon>Metazoa</taxon>
        <taxon>Chordata</taxon>
        <taxon>Craniata</taxon>
        <taxon>Vertebrata</taxon>
        <taxon>Euteleostomi</taxon>
        <taxon>Mammalia</taxon>
        <taxon>Eutheria</taxon>
        <taxon>Euarchontoglires</taxon>
        <taxon>Glires</taxon>
        <taxon>Rodentia</taxon>
        <taxon>Myomorpha</taxon>
        <taxon>Muroidea</taxon>
        <taxon>Muridae</taxon>
        <taxon>Murinae</taxon>
        <taxon>Rattus</taxon>
    </lineage>
</organism>
<reference key="1">
    <citation type="journal article" date="2004" name="Genome Res.">
        <title>The status, quality, and expansion of the NIH full-length cDNA project: the Mammalian Gene Collection (MGC).</title>
        <authorList>
            <consortium name="The MGC Project Team"/>
        </authorList>
    </citation>
    <scope>NUCLEOTIDE SEQUENCE [LARGE SCALE MRNA]</scope>
    <source>
        <tissue>Prostate</tissue>
    </source>
</reference>
<sequence length="536" mass="57970">MAERAGRRCCLGWDFSTQQVKVVAVDAELNVFYEDSVHFDRDLPEFGTQGGVHVHKDRLTVTSPVLMWVQALDLILEKMKASGFDFSQVLALSGAGQQHGSVYWKTGASLALSSLSPALLLHQQLQACFSVSDCPIWMDSSTTAQCHQLEAAVGGAQALSCLTGSRAYERFTGNQISKIFQKNPEAYSNSERISLVSSFAASLFLGRYSPIDYSDGSGMNLLQIQEKVWSQACLDACAPHLKEKLGSPVPSCSVVGAISSYYVQRYGFPPGCKVVAFTGDNPASLAGMRLEEGDVAVSLGTSDTLFLWLQKPMPALEGHIFCNPVDARQYMALLCFKNGSLMREKIRDESASCSWNKFSKALQSTEMGNNGNLGFYFDVMEITPEIIGCHRFNADNMEVSAFPGDVEIRALVEGQFMAKRIHAEGLGYRIMPKTKILATGGASHNKDILQVLADVFGAPVYVIDTTSSACVGSAYRAFHGLAGGTGVAFSEVVKSAPQPSLAATPNPGASQVYAALLPRYAELEQRILSKARGPLE</sequence>